<comment type="function">
    <text evidence="1">Binds specifically to cytosolic chaperonin (c-CPN) and transfers target proteins to it. Binds to nascent polypeptide chain and promotes folding in an environment in which there are many competing pathways for nonnative proteins (By similarity).</text>
</comment>
<comment type="subunit">
    <text evidence="1">Heterohexamer of two PFD-alpha type and four PFD-beta type subunits.</text>
</comment>
<comment type="similarity">
    <text evidence="2">Belongs to the prefoldin subunit beta family.</text>
</comment>
<keyword id="KW-0143">Chaperone</keyword>
<keyword id="KW-1185">Reference proteome</keyword>
<evidence type="ECO:0000250" key="1"/>
<evidence type="ECO:0000305" key="2"/>
<sequence length="132" mass="15479">MSKTMIEKVDEVLETEVCAADQKMINLFGRLNNRKHELMREKKAKQEDLEKATDSQDDLFIADDDSKFKYSMGEAFLEVNKEDAESLIEKYINKLEEDIKKIDSDINDINEKHKELKVILYAKFKNSINLEE</sequence>
<gene>
    <name type="primary">pfdn4</name>
    <name type="ORF">DDB_G0281873</name>
</gene>
<proteinExistence type="inferred from homology"/>
<protein>
    <recommendedName>
        <fullName>Probable prefoldin subunit 4</fullName>
    </recommendedName>
</protein>
<accession>Q54TB7</accession>
<dbReference type="EMBL" id="AAFI02000043">
    <property type="protein sequence ID" value="EAL66496.1"/>
    <property type="molecule type" value="Genomic_DNA"/>
</dbReference>
<dbReference type="RefSeq" id="XP_640472.1">
    <property type="nucleotide sequence ID" value="XM_635380.1"/>
</dbReference>
<dbReference type="SMR" id="Q54TB7"/>
<dbReference type="FunCoup" id="Q54TB7">
    <property type="interactions" value="508"/>
</dbReference>
<dbReference type="STRING" id="44689.Q54TB7"/>
<dbReference type="PaxDb" id="44689-DDB0237717"/>
<dbReference type="EnsemblProtists" id="EAL66496">
    <property type="protein sequence ID" value="EAL66496"/>
    <property type="gene ID" value="DDB_G0281873"/>
</dbReference>
<dbReference type="GeneID" id="8623285"/>
<dbReference type="KEGG" id="ddi:DDB_G0281873"/>
<dbReference type="dictyBase" id="DDB_G0281873">
    <property type="gene designation" value="pfdn4"/>
</dbReference>
<dbReference type="VEuPathDB" id="AmoebaDB:DDB_G0281873"/>
<dbReference type="eggNOG" id="KOG1760">
    <property type="taxonomic scope" value="Eukaryota"/>
</dbReference>
<dbReference type="HOGENOM" id="CLU_130032_0_0_1"/>
<dbReference type="InParanoid" id="Q54TB7"/>
<dbReference type="OMA" id="KFGRAIN"/>
<dbReference type="PhylomeDB" id="Q54TB7"/>
<dbReference type="PRO" id="PR:Q54TB7"/>
<dbReference type="Proteomes" id="UP000002195">
    <property type="component" value="Chromosome 3"/>
</dbReference>
<dbReference type="GO" id="GO:0005737">
    <property type="term" value="C:cytoplasm"/>
    <property type="evidence" value="ECO:0000318"/>
    <property type="project" value="GO_Central"/>
</dbReference>
<dbReference type="GO" id="GO:0016272">
    <property type="term" value="C:prefoldin complex"/>
    <property type="evidence" value="ECO:0000318"/>
    <property type="project" value="GO_Central"/>
</dbReference>
<dbReference type="GO" id="GO:0051082">
    <property type="term" value="F:unfolded protein binding"/>
    <property type="evidence" value="ECO:0000318"/>
    <property type="project" value="GO_Central"/>
</dbReference>
<dbReference type="GO" id="GO:0006457">
    <property type="term" value="P:protein folding"/>
    <property type="evidence" value="ECO:0000318"/>
    <property type="project" value="GO_Central"/>
</dbReference>
<dbReference type="CDD" id="cd23165">
    <property type="entry name" value="Prefoldin_4"/>
    <property type="match status" value="1"/>
</dbReference>
<dbReference type="FunFam" id="1.10.287.370:FF:000005">
    <property type="entry name" value="Prefoldin subunit 4"/>
    <property type="match status" value="1"/>
</dbReference>
<dbReference type="Gene3D" id="1.10.287.370">
    <property type="match status" value="1"/>
</dbReference>
<dbReference type="InterPro" id="IPR002777">
    <property type="entry name" value="PFD_beta-like"/>
</dbReference>
<dbReference type="InterPro" id="IPR016661">
    <property type="entry name" value="PFDN4"/>
</dbReference>
<dbReference type="InterPro" id="IPR009053">
    <property type="entry name" value="Prefoldin"/>
</dbReference>
<dbReference type="PANTHER" id="PTHR21100">
    <property type="entry name" value="PREFOLDIN SUBUNIT 4"/>
    <property type="match status" value="1"/>
</dbReference>
<dbReference type="PANTHER" id="PTHR21100:SF9">
    <property type="entry name" value="PREFOLDIN SUBUNIT 4"/>
    <property type="match status" value="1"/>
</dbReference>
<dbReference type="Pfam" id="PF01920">
    <property type="entry name" value="Prefoldin_2"/>
    <property type="match status" value="1"/>
</dbReference>
<dbReference type="PIRSF" id="PIRSF016477">
    <property type="entry name" value="Prefoldin_subunit_4"/>
    <property type="match status" value="1"/>
</dbReference>
<dbReference type="SUPFAM" id="SSF46579">
    <property type="entry name" value="Prefoldin"/>
    <property type="match status" value="1"/>
</dbReference>
<reference key="1">
    <citation type="journal article" date="2005" name="Nature">
        <title>The genome of the social amoeba Dictyostelium discoideum.</title>
        <authorList>
            <person name="Eichinger L."/>
            <person name="Pachebat J.A."/>
            <person name="Gloeckner G."/>
            <person name="Rajandream M.A."/>
            <person name="Sucgang R."/>
            <person name="Berriman M."/>
            <person name="Song J."/>
            <person name="Olsen R."/>
            <person name="Szafranski K."/>
            <person name="Xu Q."/>
            <person name="Tunggal B."/>
            <person name="Kummerfeld S."/>
            <person name="Madera M."/>
            <person name="Konfortov B.A."/>
            <person name="Rivero F."/>
            <person name="Bankier A.T."/>
            <person name="Lehmann R."/>
            <person name="Hamlin N."/>
            <person name="Davies R."/>
            <person name="Gaudet P."/>
            <person name="Fey P."/>
            <person name="Pilcher K."/>
            <person name="Chen G."/>
            <person name="Saunders D."/>
            <person name="Sodergren E.J."/>
            <person name="Davis P."/>
            <person name="Kerhornou A."/>
            <person name="Nie X."/>
            <person name="Hall N."/>
            <person name="Anjard C."/>
            <person name="Hemphill L."/>
            <person name="Bason N."/>
            <person name="Farbrother P."/>
            <person name="Desany B."/>
            <person name="Just E."/>
            <person name="Morio T."/>
            <person name="Rost R."/>
            <person name="Churcher C.M."/>
            <person name="Cooper J."/>
            <person name="Haydock S."/>
            <person name="van Driessche N."/>
            <person name="Cronin A."/>
            <person name="Goodhead I."/>
            <person name="Muzny D.M."/>
            <person name="Mourier T."/>
            <person name="Pain A."/>
            <person name="Lu M."/>
            <person name="Harper D."/>
            <person name="Lindsay R."/>
            <person name="Hauser H."/>
            <person name="James K.D."/>
            <person name="Quiles M."/>
            <person name="Madan Babu M."/>
            <person name="Saito T."/>
            <person name="Buchrieser C."/>
            <person name="Wardroper A."/>
            <person name="Felder M."/>
            <person name="Thangavelu M."/>
            <person name="Johnson D."/>
            <person name="Knights A."/>
            <person name="Loulseged H."/>
            <person name="Mungall K.L."/>
            <person name="Oliver K."/>
            <person name="Price C."/>
            <person name="Quail M.A."/>
            <person name="Urushihara H."/>
            <person name="Hernandez J."/>
            <person name="Rabbinowitsch E."/>
            <person name="Steffen D."/>
            <person name="Sanders M."/>
            <person name="Ma J."/>
            <person name="Kohara Y."/>
            <person name="Sharp S."/>
            <person name="Simmonds M.N."/>
            <person name="Spiegler S."/>
            <person name="Tivey A."/>
            <person name="Sugano S."/>
            <person name="White B."/>
            <person name="Walker D."/>
            <person name="Woodward J.R."/>
            <person name="Winckler T."/>
            <person name="Tanaka Y."/>
            <person name="Shaulsky G."/>
            <person name="Schleicher M."/>
            <person name="Weinstock G.M."/>
            <person name="Rosenthal A."/>
            <person name="Cox E.C."/>
            <person name="Chisholm R.L."/>
            <person name="Gibbs R.A."/>
            <person name="Loomis W.F."/>
            <person name="Platzer M."/>
            <person name="Kay R.R."/>
            <person name="Williams J.G."/>
            <person name="Dear P.H."/>
            <person name="Noegel A.A."/>
            <person name="Barrell B.G."/>
            <person name="Kuspa A."/>
        </authorList>
    </citation>
    <scope>NUCLEOTIDE SEQUENCE [LARGE SCALE GENOMIC DNA]</scope>
    <source>
        <strain>AX4</strain>
    </source>
</reference>
<organism>
    <name type="scientific">Dictyostelium discoideum</name>
    <name type="common">Social amoeba</name>
    <dbReference type="NCBI Taxonomy" id="44689"/>
    <lineage>
        <taxon>Eukaryota</taxon>
        <taxon>Amoebozoa</taxon>
        <taxon>Evosea</taxon>
        <taxon>Eumycetozoa</taxon>
        <taxon>Dictyostelia</taxon>
        <taxon>Dictyosteliales</taxon>
        <taxon>Dictyosteliaceae</taxon>
        <taxon>Dictyostelium</taxon>
    </lineage>
</organism>
<name>PFD4_DICDI</name>
<feature type="chain" id="PRO_0000328128" description="Probable prefoldin subunit 4">
    <location>
        <begin position="1"/>
        <end position="132"/>
    </location>
</feature>